<keyword id="KW-0067">ATP-binding</keyword>
<keyword id="KW-0119">Carbohydrate metabolism</keyword>
<keyword id="KW-0418">Kinase</keyword>
<keyword id="KW-0547">Nucleotide-binding</keyword>
<keyword id="KW-0808">Transferase</keyword>
<sequence length="436" mass="45926">MPASNFPTGVHDMRLGVIADDFTGATDIAGFLVGNGLRTIQLNGVPADDLAVDADAVVISLKARSCPTGQAIAESLAALKWLQKNNCQQFFFKYCSTFDSTPKGNIGPVTDALLEALGEEFTVICPALPVNGRTIYNGYLFVNGVLLSETGMRNHPVTPMTDSNIMRVMESQSRGRAGNISSTIVDQGSDAVRDALRKLQSEGIRYAVLDALNDQHIETLGRAVSQMKLVTGGSGLADGMARAWTQLRGKNVAAAEAAGAPVKGRTVILSGSCSQMTNAQVAAYKAKAPALAMDVEKAINDAAYIDVLAEWVLAQSGDALPPLVYATMPPEALKAVQERFGGERASAAIEDLFGQLAKRLEAEGFTRFIVAGGETSGAVTQALAIDGFTIGPQIAPGVPWVRGIGKPLSLALKSGNFGTEAFFFEAQKIANQEGDK</sequence>
<reference key="1">
    <citation type="journal article" date="2002" name="Proc. Natl. Acad. Sci. U.S.A.">
        <title>The genome sequence of the facultative intracellular pathogen Brucella melitensis.</title>
        <authorList>
            <person name="DelVecchio V.G."/>
            <person name="Kapatral V."/>
            <person name="Redkar R.J."/>
            <person name="Patra G."/>
            <person name="Mujer C."/>
            <person name="Los T."/>
            <person name="Ivanova N."/>
            <person name="Anderson I."/>
            <person name="Bhattacharyya A."/>
            <person name="Lykidis A."/>
            <person name="Reznik G."/>
            <person name="Jablonski L."/>
            <person name="Larsen N."/>
            <person name="D'Souza M."/>
            <person name="Bernal A."/>
            <person name="Mazur M."/>
            <person name="Goltsman E."/>
            <person name="Selkov E."/>
            <person name="Elzer P.H."/>
            <person name="Hagius S."/>
            <person name="O'Callaghan D."/>
            <person name="Letesson J.-J."/>
            <person name="Haselkorn R."/>
            <person name="Kyrpides N.C."/>
            <person name="Overbeek R."/>
        </authorList>
    </citation>
    <scope>NUCLEOTIDE SEQUENCE [LARGE SCALE GENOMIC DNA]</scope>
    <source>
        <strain>ATCC 23456 / CCUG 17765 / NCTC 10094 / 16M</strain>
    </source>
</reference>
<reference key="2">
    <citation type="journal article" date="2016" name="Proc. Natl. Acad. Sci. U.S.A.">
        <title>Assignment of function to a domain of unknown function: DUF1537 is a new kinase family in catabolic pathways for acid sugars.</title>
        <authorList>
            <person name="Zhang X."/>
            <person name="Carter M.S."/>
            <person name="Vetting M.W."/>
            <person name="San Francisco B."/>
            <person name="Zhao S."/>
            <person name="Al-Obaidi N.F."/>
            <person name="Solbiati J.O."/>
            <person name="Thiaville J.J."/>
            <person name="de Crecy-Lagard V."/>
            <person name="Jacobson M.P."/>
            <person name="Almo S.C."/>
            <person name="Gerlt J.A."/>
        </authorList>
    </citation>
    <scope>FUNCTION</scope>
    <scope>CATALYTIC ACTIVITY</scope>
    <source>
        <strain>ATCC 23456 / CCUG 17765 / NCTC 10094 / 16M</strain>
    </source>
</reference>
<evidence type="ECO:0000250" key="1">
    <source>
        <dbReference type="UniProtKB" id="Q0KBC8"/>
    </source>
</evidence>
<evidence type="ECO:0000269" key="2">
    <source>
    </source>
</evidence>
<evidence type="ECO:0000303" key="3">
    <source>
    </source>
</evidence>
<evidence type="ECO:0000305" key="4"/>
<evidence type="ECO:0000312" key="5">
    <source>
        <dbReference type="EMBL" id="AAL54333.1"/>
    </source>
</evidence>
<comment type="function">
    <text evidence="2">Catalyzes the ATP-dependent phosphorylation of 3-oxo-tetronate to 3-oxo-tetronate 4-phosphate.</text>
</comment>
<comment type="catalytic activity">
    <reaction evidence="2">
        <text>3-dehydro-L-erythronate + ATP = 3-dehydro-4-O-phospho-L-erythronate + ADP + H(+)</text>
        <dbReference type="Rhea" id="RHEA:52552"/>
        <dbReference type="ChEBI" id="CHEBI:15378"/>
        <dbReference type="ChEBI" id="CHEBI:30616"/>
        <dbReference type="ChEBI" id="CHEBI:136592"/>
        <dbReference type="ChEBI" id="CHEBI:136670"/>
        <dbReference type="ChEBI" id="CHEBI:456216"/>
        <dbReference type="EC" id="2.7.1.217"/>
    </reaction>
</comment>
<comment type="catalytic activity">
    <reaction evidence="2">
        <text>3-dehydro-D-erythronate + ATP = 3-dehydro-4-O-phospho-D-erythronate + ADP + H(+)</text>
        <dbReference type="Rhea" id="RHEA:52556"/>
        <dbReference type="ChEBI" id="CHEBI:15378"/>
        <dbReference type="ChEBI" id="CHEBI:30616"/>
        <dbReference type="ChEBI" id="CHEBI:57958"/>
        <dbReference type="ChEBI" id="CHEBI:136593"/>
        <dbReference type="ChEBI" id="CHEBI:456216"/>
        <dbReference type="EC" id="2.7.1.217"/>
    </reaction>
</comment>
<comment type="similarity">
    <text evidence="4">Belongs to the four-carbon acid sugar kinase family.</text>
</comment>
<gene>
    <name evidence="3" type="primary">otnK</name>
    <name evidence="5" type="ordered locus">BMEII1091</name>
</gene>
<proteinExistence type="evidence at protein level"/>
<protein>
    <recommendedName>
        <fullName evidence="3">3-oxo-tetronate kinase</fullName>
        <ecNumber evidence="2">2.7.1.217</ecNumber>
    </recommendedName>
    <alternativeName>
        <fullName evidence="4">3-dehydrotetronate 4-kinase</fullName>
    </alternativeName>
</protein>
<accession>Q8YB10</accession>
<organism>
    <name type="scientific">Brucella melitensis biotype 1 (strain ATCC 23456 / CCUG 17765 / NCTC 10094 / 16M)</name>
    <dbReference type="NCBI Taxonomy" id="224914"/>
    <lineage>
        <taxon>Bacteria</taxon>
        <taxon>Pseudomonadati</taxon>
        <taxon>Pseudomonadota</taxon>
        <taxon>Alphaproteobacteria</taxon>
        <taxon>Hyphomicrobiales</taxon>
        <taxon>Brucellaceae</taxon>
        <taxon>Brucella/Ochrobactrum group</taxon>
        <taxon>Brucella</taxon>
    </lineage>
</organism>
<name>OTNK_BRUME</name>
<feature type="chain" id="PRO_0000439679" description="3-oxo-tetronate kinase">
    <location>
        <begin position="1"/>
        <end position="436"/>
    </location>
</feature>
<feature type="binding site" evidence="1">
    <location>
        <position position="272"/>
    </location>
    <ligand>
        <name>ATP</name>
        <dbReference type="ChEBI" id="CHEBI:30616"/>
    </ligand>
</feature>
<feature type="binding site" evidence="1">
    <location>
        <begin position="372"/>
        <end position="375"/>
    </location>
    <ligand>
        <name>ATP</name>
        <dbReference type="ChEBI" id="CHEBI:30616"/>
    </ligand>
</feature>
<feature type="binding site" evidence="1">
    <location>
        <position position="415"/>
    </location>
    <ligand>
        <name>ATP</name>
        <dbReference type="ChEBI" id="CHEBI:30616"/>
    </ligand>
</feature>
<dbReference type="EC" id="2.7.1.217" evidence="2"/>
<dbReference type="EMBL" id="AE008918">
    <property type="protein sequence ID" value="AAL54333.1"/>
    <property type="molecule type" value="Genomic_DNA"/>
</dbReference>
<dbReference type="PIR" id="AB3646">
    <property type="entry name" value="AB3646"/>
</dbReference>
<dbReference type="SMR" id="Q8YB10"/>
<dbReference type="KEGG" id="bme:BMEII1091"/>
<dbReference type="eggNOG" id="COG3395">
    <property type="taxonomic scope" value="Bacteria"/>
</dbReference>
<dbReference type="Proteomes" id="UP000000419">
    <property type="component" value="Chromosome II"/>
</dbReference>
<dbReference type="GO" id="GO:0005524">
    <property type="term" value="F:ATP binding"/>
    <property type="evidence" value="ECO:0007669"/>
    <property type="project" value="UniProtKB-KW"/>
</dbReference>
<dbReference type="GO" id="GO:0016301">
    <property type="term" value="F:kinase activity"/>
    <property type="evidence" value="ECO:0007669"/>
    <property type="project" value="UniProtKB-KW"/>
</dbReference>
<dbReference type="Gene3D" id="3.40.980.20">
    <property type="entry name" value="Four-carbon acid sugar kinase, nucleotide binding domain"/>
    <property type="match status" value="1"/>
</dbReference>
<dbReference type="Gene3D" id="3.40.50.10840">
    <property type="entry name" value="Putative sugar-binding, N-terminal domain"/>
    <property type="match status" value="1"/>
</dbReference>
<dbReference type="InterPro" id="IPR010737">
    <property type="entry name" value="4-carb_acid_sugar_kinase_N"/>
</dbReference>
<dbReference type="InterPro" id="IPR037051">
    <property type="entry name" value="4-carb_acid_sugar_kinase_N_sf"/>
</dbReference>
<dbReference type="InterPro" id="IPR031475">
    <property type="entry name" value="NBD_C"/>
</dbReference>
<dbReference type="InterPro" id="IPR042213">
    <property type="entry name" value="NBD_C_sf"/>
</dbReference>
<dbReference type="InterPro" id="IPR050007">
    <property type="entry name" value="OtnK"/>
</dbReference>
<dbReference type="NCBIfam" id="NF043035">
    <property type="entry name" value="OxoTetrKin"/>
    <property type="match status" value="1"/>
</dbReference>
<dbReference type="Pfam" id="PF17042">
    <property type="entry name" value="NBD_C"/>
    <property type="match status" value="1"/>
</dbReference>
<dbReference type="Pfam" id="PF07005">
    <property type="entry name" value="SBD_N"/>
    <property type="match status" value="1"/>
</dbReference>
<dbReference type="SUPFAM" id="SSF142764">
    <property type="entry name" value="YgbK-like"/>
    <property type="match status" value="1"/>
</dbReference>